<organismHost>
    <name type="scientific">Magallana gigas</name>
    <name type="common">Pacific oyster</name>
    <name type="synonym">Crassostrea gigas</name>
    <dbReference type="NCBI Taxonomy" id="29159"/>
</organismHost>
<organismHost>
    <name type="scientific">Pecten maximus</name>
    <name type="common">King scallop</name>
    <name type="synonym">Pilgrim's clam</name>
    <dbReference type="NCBI Taxonomy" id="6579"/>
</organismHost>
<reference key="1">
    <citation type="journal article" date="2005" name="J. Gen. Virol.">
        <title>A novel class of herpesvirus with bivalve hosts.</title>
        <authorList>
            <person name="Davison A.J."/>
            <person name="Trus B.L."/>
            <person name="Cheng N."/>
            <person name="Steven A.C."/>
            <person name="Watson M.S."/>
            <person name="Cunningham C."/>
            <person name="Le Deuff R.M."/>
            <person name="Renault T."/>
        </authorList>
    </citation>
    <scope>NUCLEOTIDE SEQUENCE [LARGE SCALE GENOMIC DNA]</scope>
</reference>
<sequence length="76" mass="8985">MYSLLLHLTPRHISPNPDPALHYPMTRLFRQCCPMVWLSHLLLHGVVQHASETYYRIPWPALWSCFFALVFMTEDS</sequence>
<dbReference type="EMBL" id="AY509253">
    <property type="protein sequence ID" value="AAS00908.1"/>
    <property type="molecule type" value="Genomic_DNA"/>
</dbReference>
<dbReference type="RefSeq" id="YP_024561.1">
    <property type="nucleotide sequence ID" value="NC_005881.2"/>
</dbReference>
<dbReference type="KEGG" id="vg:2948247"/>
<dbReference type="Proteomes" id="UP000007021">
    <property type="component" value="Segment"/>
</dbReference>
<accession>Q6R7K7</accession>
<proteinExistence type="predicted"/>
<protein>
    <recommendedName>
        <fullName>Uncharacterized protein ORF16</fullName>
    </recommendedName>
</protein>
<feature type="chain" id="PRO_0000385048" description="Uncharacterized protein ORF16">
    <location>
        <begin position="1"/>
        <end position="76"/>
    </location>
</feature>
<keyword id="KW-1185">Reference proteome</keyword>
<gene>
    <name type="ORF">ORF16</name>
</gene>
<name>Y016_OSHVF</name>
<organism>
    <name type="scientific">Ostreid herpesvirus 1 (isolate France)</name>
    <name type="common">OsHV-1</name>
    <name type="synonym">Pacific oyster herpesvirus</name>
    <dbReference type="NCBI Taxonomy" id="654903"/>
    <lineage>
        <taxon>Viruses</taxon>
        <taxon>Duplodnaviria</taxon>
        <taxon>Heunggongvirae</taxon>
        <taxon>Peploviricota</taxon>
        <taxon>Herviviricetes</taxon>
        <taxon>Herpesvirales</taxon>
        <taxon>Malacoherpesviridae</taxon>
        <taxon>Ostreavirus</taxon>
        <taxon>Ostreavirus ostreidmalaco1</taxon>
        <taxon>Ostreid herpesvirus 1</taxon>
    </lineage>
</organism>